<name>CLPB2_ORYSJ</name>
<protein>
    <recommendedName>
        <fullName>Chaperone protein ClpB2, chloroplastic</fullName>
    </recommendedName>
    <alternativeName>
        <fullName>ATP-dependent Clp protease ATP-binding subunit ClpB homolog 2</fullName>
    </alternativeName>
    <alternativeName>
        <fullName>Casein lytic proteinase B2</fullName>
    </alternativeName>
</protein>
<accession>Q75GT3</accession>
<accession>A0A0P0VZN5</accession>
<accession>Q75I57</accession>
<organism>
    <name type="scientific">Oryza sativa subsp. japonica</name>
    <name type="common">Rice</name>
    <dbReference type="NCBI Taxonomy" id="39947"/>
    <lineage>
        <taxon>Eukaryota</taxon>
        <taxon>Viridiplantae</taxon>
        <taxon>Streptophyta</taxon>
        <taxon>Embryophyta</taxon>
        <taxon>Tracheophyta</taxon>
        <taxon>Spermatophyta</taxon>
        <taxon>Magnoliopsida</taxon>
        <taxon>Liliopsida</taxon>
        <taxon>Poales</taxon>
        <taxon>Poaceae</taxon>
        <taxon>BOP clade</taxon>
        <taxon>Oryzoideae</taxon>
        <taxon>Oryzeae</taxon>
        <taxon>Oryzinae</taxon>
        <taxon>Oryza</taxon>
        <taxon>Oryza sativa</taxon>
    </lineage>
</organism>
<keyword id="KW-0067">ATP-binding</keyword>
<keyword id="KW-0143">Chaperone</keyword>
<keyword id="KW-0150">Chloroplast</keyword>
<keyword id="KW-0547">Nucleotide-binding</keyword>
<keyword id="KW-0934">Plastid</keyword>
<keyword id="KW-1185">Reference proteome</keyword>
<keyword id="KW-0677">Repeat</keyword>
<keyword id="KW-0809">Transit peptide</keyword>
<sequence>MAAAPPLAAGLRPAMAAAQAPVVAAAWGVGARRGAALSSSARCRALRLSRGGGGGRDGWVPPPVVGRMPPRTLSVRCAASNGRITQQEFTEMAWQSIVSSPEVAKESKHQIVETEHLMKSLLEQRNGLARRIFSKAGVDNTRLLDATEKFIQRQPKVLGEDPGSMLGRDLEALIQRARDFKKEYGDSFVSVEHLVLGFAEDKRFGRQLFKDFQITVQSLKTAIESIRGKQNVIDQDPEGKYEALDKYGKDLTAMARQGKLDPVIGRDDEIRRCIQILSRRTKNNPVLIGEPGVGKTAIAEGLAQRIVQGDVPQALTNRRLIALDMGALIAGAKYRGEFEDRLKAVLKEVTDSDGQTILFIDEIHTVVGAGATNGAMDAGNLLKPMLGRGELRCIGATTLDEYRKYIEKDPALERRFQQVYVDQPSVEDTISILRGLRERYELHHGVRISDSALVAAALLSDRYISGRFLPDKAIDLVDESAAKLKMEITSKPTALDEIDRAVIKLEMERLSLTNDTDKASRDRLSRIEAELSLLKEKQKDLTEQWEREKSVMTKIQSIKEEIDRVNVEIQQAEREYDLNRAAELKYGSLNALQRQLQTTEKELDEYQSSGKSMLREEVTQDDIAEIVSRWTGIPVSKLKQSDREKLLYLEEELHKRVVGQDPAVKAVSEAIQRSRAGLSDPNRPIASFMFMGPTGVGKTELAKALAAFMFNTEEAVVRIDMSEYMEKHSVSRLIGAPPGYVGYEEGGQLTEAVRRRPYSIILFDEIEKAHGDVFNVFLQILDDGRVTDSQGRKVSFTNSIIIMTSNVGSQFILNMDEEGGSTDSAYENIKKRVMDAARSVFRPEFMNRIDEYIVFKPLEREQINSIVKLQLARVQKRIADRKIKLEVSPGAVEFLGSLGYDPNYGARPVKRVIQQYVENELAKGILRGDFKDEDSILVDTQVTVPSNGQLPQQKLVFHKMSEESAPAAAEDEKFLPAV</sequence>
<comment type="function">
    <text>Molecular chaperone that may play a role in chloroplast development.</text>
</comment>
<comment type="subcellular location">
    <subcellularLocation>
        <location evidence="4">Plastid</location>
        <location evidence="4">Chloroplast</location>
    </subcellularLocation>
</comment>
<comment type="induction">
    <text evidence="4">By heat and oxidative stresses.</text>
</comment>
<comment type="similarity">
    <text evidence="5">Belongs to the ClpA/ClpB family.</text>
</comment>
<reference key="1">
    <citation type="journal article" date="2005" name="Genome Res.">
        <title>Sequence, annotation, and analysis of synteny between rice chromosome 3 and diverged grass species.</title>
        <authorList>
            <consortium name="The rice chromosome 3 sequencing consortium"/>
            <person name="Buell C.R."/>
            <person name="Yuan Q."/>
            <person name="Ouyang S."/>
            <person name="Liu J."/>
            <person name="Zhu W."/>
            <person name="Wang A."/>
            <person name="Maiti R."/>
            <person name="Haas B."/>
            <person name="Wortman J."/>
            <person name="Pertea M."/>
            <person name="Jones K.M."/>
            <person name="Kim M."/>
            <person name="Overton L."/>
            <person name="Tsitrin T."/>
            <person name="Fadrosh D."/>
            <person name="Bera J."/>
            <person name="Weaver B."/>
            <person name="Jin S."/>
            <person name="Johri S."/>
            <person name="Reardon M."/>
            <person name="Webb K."/>
            <person name="Hill J."/>
            <person name="Moffat K."/>
            <person name="Tallon L."/>
            <person name="Van Aken S."/>
            <person name="Lewis M."/>
            <person name="Utterback T."/>
            <person name="Feldblyum T."/>
            <person name="Zismann V."/>
            <person name="Iobst S."/>
            <person name="Hsiao J."/>
            <person name="de Vazeille A.R."/>
            <person name="Salzberg S.L."/>
            <person name="White O."/>
            <person name="Fraser C.M."/>
            <person name="Yu Y."/>
            <person name="Kim H."/>
            <person name="Rambo T."/>
            <person name="Currie J."/>
            <person name="Collura K."/>
            <person name="Kernodle-Thompson S."/>
            <person name="Wei F."/>
            <person name="Kudrna K."/>
            <person name="Ammiraju J.S.S."/>
            <person name="Luo M."/>
            <person name="Goicoechea J.L."/>
            <person name="Wing R.A."/>
            <person name="Henry D."/>
            <person name="Oates R."/>
            <person name="Palmer M."/>
            <person name="Pries G."/>
            <person name="Saski C."/>
            <person name="Simmons J."/>
            <person name="Soderlund C."/>
            <person name="Nelson W."/>
            <person name="de la Bastide M."/>
            <person name="Spiegel L."/>
            <person name="Nascimento L."/>
            <person name="Huang E."/>
            <person name="Preston R."/>
            <person name="Zutavern T."/>
            <person name="Palmer L."/>
            <person name="O'Shaughnessy A."/>
            <person name="Dike S."/>
            <person name="McCombie W.R."/>
            <person name="Minx P."/>
            <person name="Cordum H."/>
            <person name="Wilson R."/>
            <person name="Jin W."/>
            <person name="Lee H.R."/>
            <person name="Jiang J."/>
            <person name="Jackson S."/>
        </authorList>
    </citation>
    <scope>NUCLEOTIDE SEQUENCE [LARGE SCALE GENOMIC DNA]</scope>
    <source>
        <strain>cv. Nipponbare</strain>
    </source>
</reference>
<reference key="2">
    <citation type="journal article" date="2005" name="Nature">
        <title>The map-based sequence of the rice genome.</title>
        <authorList>
            <consortium name="International rice genome sequencing project (IRGSP)"/>
        </authorList>
    </citation>
    <scope>NUCLEOTIDE SEQUENCE [LARGE SCALE GENOMIC DNA]</scope>
    <source>
        <strain>cv. Nipponbare</strain>
    </source>
</reference>
<reference key="3">
    <citation type="journal article" date="2008" name="Nucleic Acids Res.">
        <title>The rice annotation project database (RAP-DB): 2008 update.</title>
        <authorList>
            <consortium name="The rice annotation project (RAP)"/>
        </authorList>
    </citation>
    <scope>GENOME REANNOTATION</scope>
    <source>
        <strain>cv. Nipponbare</strain>
    </source>
</reference>
<reference key="4">
    <citation type="journal article" date="2013" name="Rice">
        <title>Improvement of the Oryza sativa Nipponbare reference genome using next generation sequence and optical map data.</title>
        <authorList>
            <person name="Kawahara Y."/>
            <person name="de la Bastide M."/>
            <person name="Hamilton J.P."/>
            <person name="Kanamori H."/>
            <person name="McCombie W.R."/>
            <person name="Ouyang S."/>
            <person name="Schwartz D.C."/>
            <person name="Tanaka T."/>
            <person name="Wu J."/>
            <person name="Zhou S."/>
            <person name="Childs K.L."/>
            <person name="Davidson R.M."/>
            <person name="Lin H."/>
            <person name="Quesada-Ocampo L."/>
            <person name="Vaillancourt B."/>
            <person name="Sakai H."/>
            <person name="Lee S.S."/>
            <person name="Kim J."/>
            <person name="Numa H."/>
            <person name="Itoh T."/>
            <person name="Buell C.R."/>
            <person name="Matsumoto T."/>
        </authorList>
    </citation>
    <scope>GENOME REANNOTATION</scope>
    <source>
        <strain>cv. Nipponbare</strain>
    </source>
</reference>
<reference key="5">
    <citation type="journal article" date="2003" name="Science">
        <title>Collection, mapping, and annotation of over 28,000 cDNA clones from japonica rice.</title>
        <authorList>
            <consortium name="The rice full-length cDNA consortium"/>
        </authorList>
    </citation>
    <scope>NUCLEOTIDE SEQUENCE [LARGE SCALE MRNA]</scope>
    <source>
        <strain>cv. Nipponbare</strain>
    </source>
</reference>
<reference key="6">
    <citation type="journal article" date="2010" name="BMC Genomics">
        <title>Genome-wide analysis of rice ClpB/HSP100, ClpC and ClpD genes.</title>
        <authorList>
            <person name="Singh A."/>
            <person name="Singh U."/>
            <person name="Mittal D."/>
            <person name="Grover A."/>
        </authorList>
    </citation>
    <scope>SUBCELLULAR LOCATION</scope>
    <scope>INDUCTION</scope>
</reference>
<proteinExistence type="evidence at transcript level"/>
<evidence type="ECO:0000250" key="1"/>
<evidence type="ECO:0000255" key="2"/>
<evidence type="ECO:0000255" key="3">
    <source>
        <dbReference type="PROSITE-ProRule" id="PRU01251"/>
    </source>
</evidence>
<evidence type="ECO:0000269" key="4">
    <source>
    </source>
</evidence>
<evidence type="ECO:0000305" key="5"/>
<feature type="transit peptide" description="Chloroplast" evidence="2">
    <location>
        <begin position="1"/>
        <end position="76"/>
    </location>
</feature>
<feature type="chain" id="PRO_0000412577" description="Chaperone protein ClpB2, chloroplastic">
    <location>
        <begin position="77"/>
        <end position="978"/>
    </location>
</feature>
<feature type="domain" description="Clp R" evidence="3">
    <location>
        <begin position="85"/>
        <end position="229"/>
    </location>
</feature>
<feature type="region of interest" description="Repeat 1" evidence="3">
    <location>
        <begin position="89"/>
        <end position="154"/>
    </location>
</feature>
<feature type="region of interest" description="Repeat 2" evidence="3">
    <location>
        <begin position="166"/>
        <end position="229"/>
    </location>
</feature>
<feature type="region of interest" description="I" evidence="1">
    <location>
        <begin position="244"/>
        <end position="492"/>
    </location>
</feature>
<feature type="region of interest" description="II" evidence="1">
    <location>
        <begin position="618"/>
        <end position="809"/>
    </location>
</feature>
<feature type="binding site" evidence="2">
    <location>
        <begin position="289"/>
        <end position="296"/>
    </location>
    <ligand>
        <name>ATP</name>
        <dbReference type="ChEBI" id="CHEBI:30616"/>
    </ligand>
</feature>
<feature type="binding site" evidence="2">
    <location>
        <begin position="692"/>
        <end position="699"/>
    </location>
    <ligand>
        <name>ATP</name>
        <dbReference type="ChEBI" id="CHEBI:30616"/>
    </ligand>
</feature>
<dbReference type="EMBL" id="AC133398">
    <property type="protein sequence ID" value="AAR01771.1"/>
    <property type="molecule type" value="Genomic_DNA"/>
</dbReference>
<dbReference type="EMBL" id="AC137999">
    <property type="protein sequence ID" value="AAS07199.1"/>
    <property type="molecule type" value="Genomic_DNA"/>
</dbReference>
<dbReference type="EMBL" id="DP000009">
    <property type="protein sequence ID" value="ABF96723.1"/>
    <property type="molecule type" value="Genomic_DNA"/>
</dbReference>
<dbReference type="EMBL" id="AP008209">
    <property type="protein sequence ID" value="BAF12324.1"/>
    <property type="molecule type" value="Genomic_DNA"/>
</dbReference>
<dbReference type="EMBL" id="AP014959">
    <property type="protein sequence ID" value="BAS84787.1"/>
    <property type="molecule type" value="Genomic_DNA"/>
</dbReference>
<dbReference type="EMBL" id="AK069123">
    <property type="protein sequence ID" value="BAG91268.1"/>
    <property type="molecule type" value="mRNA"/>
</dbReference>
<dbReference type="RefSeq" id="XP_015630429.1">
    <property type="nucleotide sequence ID" value="XM_015774943.1"/>
</dbReference>
<dbReference type="SMR" id="Q75GT3"/>
<dbReference type="FunCoup" id="Q75GT3">
    <property type="interactions" value="1395"/>
</dbReference>
<dbReference type="STRING" id="39947.Q75GT3"/>
<dbReference type="PaxDb" id="39947-Q75GT3"/>
<dbReference type="EnsemblPlants" id="Os03t0426900-01">
    <property type="protein sequence ID" value="Os03t0426900-01"/>
    <property type="gene ID" value="Os03g0426900"/>
</dbReference>
<dbReference type="Gramene" id="Os03t0426900-01">
    <property type="protein sequence ID" value="Os03t0426900-01"/>
    <property type="gene ID" value="Os03g0426900"/>
</dbReference>
<dbReference type="KEGG" id="dosa:Os03g0426900"/>
<dbReference type="eggNOG" id="KOG1051">
    <property type="taxonomic scope" value="Eukaryota"/>
</dbReference>
<dbReference type="HOGENOM" id="CLU_005070_4_1_1"/>
<dbReference type="InParanoid" id="Q75GT3"/>
<dbReference type="OMA" id="VSKMMQG"/>
<dbReference type="OrthoDB" id="47330at2759"/>
<dbReference type="Proteomes" id="UP000000763">
    <property type="component" value="Chromosome 3"/>
</dbReference>
<dbReference type="Proteomes" id="UP000059680">
    <property type="component" value="Chromosome 3"/>
</dbReference>
<dbReference type="ExpressionAtlas" id="Q75GT3">
    <property type="expression patterns" value="baseline and differential"/>
</dbReference>
<dbReference type="GO" id="GO:0009507">
    <property type="term" value="C:chloroplast"/>
    <property type="evidence" value="ECO:0000314"/>
    <property type="project" value="UniProtKB"/>
</dbReference>
<dbReference type="GO" id="GO:0005737">
    <property type="term" value="C:cytoplasm"/>
    <property type="evidence" value="ECO:0000318"/>
    <property type="project" value="GO_Central"/>
</dbReference>
<dbReference type="GO" id="GO:0005524">
    <property type="term" value="F:ATP binding"/>
    <property type="evidence" value="ECO:0007669"/>
    <property type="project" value="UniProtKB-KW"/>
</dbReference>
<dbReference type="GO" id="GO:0016887">
    <property type="term" value="F:ATP hydrolysis activity"/>
    <property type="evidence" value="ECO:0000318"/>
    <property type="project" value="GO_Central"/>
</dbReference>
<dbReference type="GO" id="GO:0034605">
    <property type="term" value="P:cellular response to heat"/>
    <property type="evidence" value="ECO:0000318"/>
    <property type="project" value="GO_Central"/>
</dbReference>
<dbReference type="GO" id="GO:0042026">
    <property type="term" value="P:protein refolding"/>
    <property type="evidence" value="ECO:0007669"/>
    <property type="project" value="InterPro"/>
</dbReference>
<dbReference type="CDD" id="cd00009">
    <property type="entry name" value="AAA"/>
    <property type="match status" value="1"/>
</dbReference>
<dbReference type="CDD" id="cd19499">
    <property type="entry name" value="RecA-like_ClpB_Hsp104-like"/>
    <property type="match status" value="1"/>
</dbReference>
<dbReference type="FunFam" id="1.10.8.60:FF:000017">
    <property type="entry name" value="ATP-dependent chaperone ClpB"/>
    <property type="match status" value="1"/>
</dbReference>
<dbReference type="FunFam" id="3.40.50.300:FF:000120">
    <property type="entry name" value="ATP-dependent chaperone ClpB"/>
    <property type="match status" value="1"/>
</dbReference>
<dbReference type="FunFam" id="3.40.50.300:FF:000025">
    <property type="entry name" value="ATP-dependent Clp protease subunit"/>
    <property type="match status" value="1"/>
</dbReference>
<dbReference type="FunFam" id="3.40.50.300:FF:000010">
    <property type="entry name" value="Chaperone clpB 1, putative"/>
    <property type="match status" value="1"/>
</dbReference>
<dbReference type="FunFam" id="1.10.1780.10:FF:000006">
    <property type="entry name" value="Chaperone protein ClpB3, chloroplastic"/>
    <property type="match status" value="1"/>
</dbReference>
<dbReference type="Gene3D" id="1.10.8.60">
    <property type="match status" value="1"/>
</dbReference>
<dbReference type="Gene3D" id="1.10.1780.10">
    <property type="entry name" value="Clp, N-terminal domain"/>
    <property type="match status" value="1"/>
</dbReference>
<dbReference type="Gene3D" id="3.40.50.300">
    <property type="entry name" value="P-loop containing nucleotide triphosphate hydrolases"/>
    <property type="match status" value="3"/>
</dbReference>
<dbReference type="InterPro" id="IPR003593">
    <property type="entry name" value="AAA+_ATPase"/>
</dbReference>
<dbReference type="InterPro" id="IPR003959">
    <property type="entry name" value="ATPase_AAA_core"/>
</dbReference>
<dbReference type="InterPro" id="IPR017730">
    <property type="entry name" value="Chaperonin_ClpB"/>
</dbReference>
<dbReference type="InterPro" id="IPR019489">
    <property type="entry name" value="Clp_ATPase_C"/>
</dbReference>
<dbReference type="InterPro" id="IPR036628">
    <property type="entry name" value="Clp_N_dom_sf"/>
</dbReference>
<dbReference type="InterPro" id="IPR004176">
    <property type="entry name" value="Clp_R_dom"/>
</dbReference>
<dbReference type="InterPro" id="IPR001270">
    <property type="entry name" value="ClpA/B"/>
</dbReference>
<dbReference type="InterPro" id="IPR018368">
    <property type="entry name" value="ClpA/B_CS1"/>
</dbReference>
<dbReference type="InterPro" id="IPR028299">
    <property type="entry name" value="ClpA/B_CS2"/>
</dbReference>
<dbReference type="InterPro" id="IPR041546">
    <property type="entry name" value="ClpA/ClpB_AAA_lid"/>
</dbReference>
<dbReference type="InterPro" id="IPR050130">
    <property type="entry name" value="ClpA_ClpB"/>
</dbReference>
<dbReference type="InterPro" id="IPR027417">
    <property type="entry name" value="P-loop_NTPase"/>
</dbReference>
<dbReference type="NCBIfam" id="TIGR03346">
    <property type="entry name" value="chaperone_ClpB"/>
    <property type="match status" value="1"/>
</dbReference>
<dbReference type="PANTHER" id="PTHR11638">
    <property type="entry name" value="ATP-DEPENDENT CLP PROTEASE"/>
    <property type="match status" value="1"/>
</dbReference>
<dbReference type="PANTHER" id="PTHR11638:SF18">
    <property type="entry name" value="HEAT SHOCK PROTEIN 104"/>
    <property type="match status" value="1"/>
</dbReference>
<dbReference type="Pfam" id="PF00004">
    <property type="entry name" value="AAA"/>
    <property type="match status" value="1"/>
</dbReference>
<dbReference type="Pfam" id="PF07724">
    <property type="entry name" value="AAA_2"/>
    <property type="match status" value="1"/>
</dbReference>
<dbReference type="Pfam" id="PF17871">
    <property type="entry name" value="AAA_lid_9"/>
    <property type="match status" value="1"/>
</dbReference>
<dbReference type="Pfam" id="PF02861">
    <property type="entry name" value="Clp_N"/>
    <property type="match status" value="2"/>
</dbReference>
<dbReference type="Pfam" id="PF10431">
    <property type="entry name" value="ClpB_D2-small"/>
    <property type="match status" value="1"/>
</dbReference>
<dbReference type="PRINTS" id="PR00300">
    <property type="entry name" value="CLPPROTEASEA"/>
</dbReference>
<dbReference type="SMART" id="SM00382">
    <property type="entry name" value="AAA"/>
    <property type="match status" value="2"/>
</dbReference>
<dbReference type="SMART" id="SM01086">
    <property type="entry name" value="ClpB_D2-small"/>
    <property type="match status" value="1"/>
</dbReference>
<dbReference type="SUPFAM" id="SSF81923">
    <property type="entry name" value="Double Clp-N motif"/>
    <property type="match status" value="1"/>
</dbReference>
<dbReference type="SUPFAM" id="SSF52540">
    <property type="entry name" value="P-loop containing nucleoside triphosphate hydrolases"/>
    <property type="match status" value="2"/>
</dbReference>
<dbReference type="PROSITE" id="PS51903">
    <property type="entry name" value="CLP_R"/>
    <property type="match status" value="1"/>
</dbReference>
<dbReference type="PROSITE" id="PS00870">
    <property type="entry name" value="CLPAB_1"/>
    <property type="match status" value="1"/>
</dbReference>
<dbReference type="PROSITE" id="PS00871">
    <property type="entry name" value="CLPAB_2"/>
    <property type="match status" value="1"/>
</dbReference>
<gene>
    <name type="primary">CLPB2</name>
    <name type="synonym">CLPB-C</name>
    <name type="ordered locus">Os03g0426900</name>
    <name type="ordered locus">LOC_Os03g31300</name>
    <name type="ORF">OSJNBa0020H02.1</name>
    <name type="ORF">OSJNBa0083F15.25</name>
</gene>